<proteinExistence type="evidence at protein level"/>
<name>PCBG_PROMA</name>
<dbReference type="EMBL" id="AF198531">
    <property type="protein sequence ID" value="AAF61306.1"/>
    <property type="molecule type" value="Genomic_DNA"/>
</dbReference>
<dbReference type="EMBL" id="AE017126">
    <property type="protein sequence ID" value="AAP99936.1"/>
    <property type="molecule type" value="Genomic_DNA"/>
</dbReference>
<dbReference type="RefSeq" id="NP_875284.1">
    <property type="nucleotide sequence ID" value="NC_005042.1"/>
</dbReference>
<dbReference type="RefSeq" id="WP_011125044.1">
    <property type="nucleotide sequence ID" value="NC_005042.1"/>
</dbReference>
<dbReference type="SMR" id="Q7VC50"/>
<dbReference type="STRING" id="167539.Pro_0892"/>
<dbReference type="EnsemblBacteria" id="AAP99936">
    <property type="protein sequence ID" value="AAP99936"/>
    <property type="gene ID" value="Pro_0892"/>
</dbReference>
<dbReference type="KEGG" id="pma:Pro_0892"/>
<dbReference type="PATRIC" id="fig|167539.5.peg.939"/>
<dbReference type="eggNOG" id="ENOG5032GXK">
    <property type="taxonomic scope" value="Bacteria"/>
</dbReference>
<dbReference type="HOGENOM" id="CLU_028310_0_0_3"/>
<dbReference type="OrthoDB" id="541763at2"/>
<dbReference type="Proteomes" id="UP000001420">
    <property type="component" value="Chromosome"/>
</dbReference>
<dbReference type="GO" id="GO:0009522">
    <property type="term" value="C:photosystem I"/>
    <property type="evidence" value="ECO:0007669"/>
    <property type="project" value="UniProtKB-KW"/>
</dbReference>
<dbReference type="GO" id="GO:0031676">
    <property type="term" value="C:plasma membrane-derived thylakoid membrane"/>
    <property type="evidence" value="ECO:0007669"/>
    <property type="project" value="UniProtKB-SubCell"/>
</dbReference>
<dbReference type="GO" id="GO:0016168">
    <property type="term" value="F:chlorophyll binding"/>
    <property type="evidence" value="ECO:0007669"/>
    <property type="project" value="UniProtKB-KW"/>
</dbReference>
<dbReference type="GO" id="GO:0009767">
    <property type="term" value="P:photosynthetic electron transport chain"/>
    <property type="evidence" value="ECO:0007669"/>
    <property type="project" value="InterPro"/>
</dbReference>
<dbReference type="InterPro" id="IPR000932">
    <property type="entry name" value="PS_antenna-like"/>
</dbReference>
<dbReference type="InterPro" id="IPR036001">
    <property type="entry name" value="PS_II_antenna-like_sf"/>
</dbReference>
<dbReference type="NCBIfam" id="TIGR03041">
    <property type="entry name" value="PS_antenn_a_b"/>
    <property type="match status" value="1"/>
</dbReference>
<dbReference type="Pfam" id="PF00421">
    <property type="entry name" value="PSII"/>
    <property type="match status" value="1"/>
</dbReference>
<dbReference type="SUPFAM" id="SSF161077">
    <property type="entry name" value="Photosystem II antenna protein-like"/>
    <property type="match status" value="1"/>
</dbReference>
<accession>Q7VC50</accession>
<accession>Q9L8M0</accession>
<gene>
    <name type="primary">pcbG</name>
    <name type="ordered locus">Pro_0892</name>
</gene>
<feature type="chain" id="PRO_0000077544" description="Divinyl chlorophyll a/b light-harvesting protein PcbG">
    <location>
        <begin position="1"/>
        <end position="353"/>
    </location>
</feature>
<feature type="transmembrane region" description="Helical" evidence="3">
    <location>
        <begin position="28"/>
        <end position="48"/>
    </location>
</feature>
<feature type="transmembrane region" description="Helical" evidence="3">
    <location>
        <begin position="64"/>
        <end position="84"/>
    </location>
</feature>
<feature type="transmembrane region" description="Helical" evidence="3">
    <location>
        <begin position="90"/>
        <end position="110"/>
    </location>
</feature>
<feature type="transmembrane region" description="Helical" evidence="3">
    <location>
        <begin position="204"/>
        <end position="224"/>
    </location>
</feature>
<feature type="transmembrane region" description="Helical" evidence="3">
    <location>
        <begin position="244"/>
        <end position="264"/>
    </location>
</feature>
<feature type="transmembrane region" description="Helical" evidence="3">
    <location>
        <begin position="308"/>
        <end position="328"/>
    </location>
</feature>
<feature type="sequence conflict" description="In Ref. 2; AAF61306." evidence="12" ref="2">
    <original>MQT</original>
    <variation>RAD</variation>
    <location>
        <begin position="1"/>
        <end position="3"/>
    </location>
</feature>
<protein>
    <recommendedName>
        <fullName>Divinyl chlorophyll a/b light-harvesting protein PcbG</fullName>
    </recommendedName>
</protein>
<keyword id="KW-0148">Chlorophyll</keyword>
<keyword id="KW-0157">Chromophore</keyword>
<keyword id="KW-0472">Membrane</keyword>
<keyword id="KW-0602">Photosynthesis</keyword>
<keyword id="KW-0603">Photosystem I</keyword>
<keyword id="KW-1185">Reference proteome</keyword>
<keyword id="KW-0793">Thylakoid</keyword>
<keyword id="KW-0812">Transmembrane</keyword>
<keyword id="KW-1133">Transmembrane helix</keyword>
<organism>
    <name type="scientific">Prochlorococcus marinus (strain SARG / CCMP1375 / SS120)</name>
    <dbReference type="NCBI Taxonomy" id="167539"/>
    <lineage>
        <taxon>Bacteria</taxon>
        <taxon>Bacillati</taxon>
        <taxon>Cyanobacteriota</taxon>
        <taxon>Cyanophyceae</taxon>
        <taxon>Synechococcales</taxon>
        <taxon>Prochlorococcaceae</taxon>
        <taxon>Prochlorococcus</taxon>
    </lineage>
</organism>
<reference key="1">
    <citation type="journal article" date="2000" name="Proc. Natl. Acad. Sci. U.S.A.">
        <title>Multiplication of antenna genes as a major adaptation to low light in a marine prokaryote.</title>
        <authorList>
            <person name="Garczarek L."/>
            <person name="Hess W.R."/>
            <person name="Holtzendorff J."/>
            <person name="van der Staay G.W.M."/>
            <person name="Partensky F."/>
        </authorList>
    </citation>
    <scope>NUCLEOTIDE SEQUENCE [GENOMIC DNA]</scope>
    <scope>FUNCTION</scope>
    <source>
        <strain>SARG / CCMP1375 / SS120</strain>
    </source>
</reference>
<reference key="2">
    <citation type="journal article" date="2003" name="Proc. Natl. Acad. Sci. U.S.A.">
        <title>Genome sequence of the cyanobacterium Prochlorococcus marinus SS120, a nearly minimal oxyphototrophic genome.</title>
        <authorList>
            <person name="Dufresne A."/>
            <person name="Salanoubat M."/>
            <person name="Partensky F."/>
            <person name="Artiguenave F."/>
            <person name="Axmann I.M."/>
            <person name="Barbe V."/>
            <person name="Duprat S."/>
            <person name="Galperin M.Y."/>
            <person name="Koonin E.V."/>
            <person name="Le Gall F."/>
            <person name="Makarova K.S."/>
            <person name="Ostrowski M."/>
            <person name="Oztas S."/>
            <person name="Robert C."/>
            <person name="Rogozin I.B."/>
            <person name="Scanlan D.J."/>
            <person name="Tandeau de Marsac N."/>
            <person name="Weissenbach J."/>
            <person name="Wincker P."/>
            <person name="Wolf Y.I."/>
            <person name="Hess W.R."/>
        </authorList>
    </citation>
    <scope>NUCLEOTIDE SEQUENCE [LARGE SCALE GENOMIC DNA]</scope>
    <source>
        <strain>SARG / CCMP1375 / SS120</strain>
    </source>
</reference>
<reference key="3">
    <citation type="journal article" date="1997" name="Photosyn. Res.">
        <title>The divinyl-chlorophyll a/b-protein complexes of two strains of the oxyphototrophic marine prokaryote Prochlorococcus -- characterization and response to changes in growth irradiance.</title>
        <authorList>
            <person name="Partensky F."/>
            <person name="La Roche J."/>
            <person name="Wyman K."/>
            <person name="Falkowski P.G."/>
        </authorList>
    </citation>
    <scope>FUNCTION</scope>
    <scope>COFACTOR</scope>
    <scope>SUBUNIT</scope>
    <scope>SUBCELLULAR LOCATION</scope>
    <source>
        <strain>SARG / CCMP1375 / SS120</strain>
    </source>
</reference>
<reference key="4">
    <citation type="journal article" date="2001" name="Nature">
        <title>Oxyphotobacteria. Antenna ring around photosystem I.</title>
        <authorList>
            <person name="Bibby T.S."/>
            <person name="Nield J."/>
            <person name="Partensky F."/>
            <person name="Barber J."/>
        </authorList>
    </citation>
    <scope>FORMS A RING AROUND TRIMERIC PSI</scope>
    <scope>SUBUNIT</scope>
    <source>
        <strain>SARG / CCMP1375 / SS120</strain>
    </source>
</reference>
<reference key="5">
    <citation type="journal article" date="2001" name="Plant Mol. Biol.">
        <title>Expression and phylogeny of the multiple antenna genes of the low-light-adapted strain Prochlorococcus marinus SS120 (Oxyphotobacteria).</title>
        <authorList>
            <person name="Garczarek L."/>
            <person name="van der Staay G.W.M."/>
            <person name="Hess W.R."/>
            <person name="Le Gall F."/>
            <person name="Partensky F."/>
        </authorList>
    </citation>
    <scope>INDUCTION</scope>
    <source>
        <strain>SARG / CCMP1375 / SS120</strain>
    </source>
</reference>
<reference key="6">
    <citation type="journal article" date="2003" name="Nature">
        <title>Low-light-adapted Prochlorococcus species possess specific antennae for each photosystem.</title>
        <authorList>
            <person name="Bibby T.S."/>
            <person name="Mary I."/>
            <person name="Nield J."/>
            <person name="Partensky F."/>
            <person name="Barber J."/>
        </authorList>
    </citation>
    <scope>INDUCTION</scope>
    <scope>INVOLVEMENT IN COMPLEXES WITH PHOTOSYSTEM I UNDER IRON-REPLETE CONDITIONS</scope>
</reference>
<evidence type="ECO:0000250" key="1"/>
<evidence type="ECO:0000250" key="2">
    <source>
        <dbReference type="UniProtKB" id="Q6Q972"/>
    </source>
</evidence>
<evidence type="ECO:0000255" key="3"/>
<evidence type="ECO:0000269" key="4">
    <source>
    </source>
</evidence>
<evidence type="ECO:0000269" key="5">
    <source>
    </source>
</evidence>
<evidence type="ECO:0000269" key="6">
    <source>
    </source>
</evidence>
<evidence type="ECO:0000269" key="7">
    <source ref="3"/>
</evidence>
<evidence type="ECO:0000303" key="8">
    <source>
    </source>
</evidence>
<evidence type="ECO:0000303" key="9">
    <source>
    </source>
</evidence>
<evidence type="ECO:0000303" key="10">
    <source>
    </source>
</evidence>
<evidence type="ECO:0000303" key="11">
    <source ref="3"/>
</evidence>
<evidence type="ECO:0000305" key="12"/>
<comment type="function">
    <text evidence="2 8 11">The antenna complex functions as a light receptor, it captures and delivers excitation energy to photosystems I. The Prochlorales pcb genes are not related to higher plant LHCs.</text>
</comment>
<comment type="cofactor">
    <cofactor evidence="11">
        <name>divinyl chlorophyll a</name>
        <dbReference type="ChEBI" id="CHEBI:73095"/>
    </cofactor>
</comment>
<comment type="cofactor">
    <cofactor evidence="11">
        <name>divinyl chlorophyll b</name>
        <dbReference type="ChEBI" id="CHEBI:73096"/>
    </cofactor>
</comment>
<comment type="subunit">
    <text evidence="5 7">The antenna complex consists of divinyl chlorophylls (a and b) and divinyl chlorophyll a/b binding proteins and binds more divinyl chlorophyll b than does the antenna complex from high-light-adapted Prochlorococcus. Also forms complexes with PSI, consisting of a PSI trimer with surrounded by a PcbG ring (probably with 18 subunits). Is the only subunit found in this ring under iron-replete conditions.</text>
</comment>
<comment type="subcellular location">
    <subcellularLocation>
        <location evidence="7">Cellular thylakoid membrane</location>
        <topology evidence="1">Multi-pass membrane protein</topology>
    </subcellularLocation>
</comment>
<comment type="induction">
    <text evidence="4 6">This transcript is moderately expressed at low and high light levels and is expressed somewhat more at 16 and 45 umol blue light/m2/s. The whole antenna complex is most highly expressed under low light; as the light levels increase antenna complex levels decrease. Thus at least in this strain the amount of antenna complex is controlled mostly at a post-transcriptional level. Transcription decreases upon iron starvation.</text>
</comment>
<comment type="miscellaneous">
    <text evidence="9 10">This low-light-adapted strain contains 8 pcb genes.</text>
</comment>
<comment type="similarity">
    <text evidence="12">Belongs to the PsbB/PsbC family. IsiA/Pcb subfamily.</text>
</comment>
<sequence length="353" mass="38709">MQTYGDPNVSYAWYAANAGAVTNKSGRFISSHIAHTGLICFGAGANTLFELARYNPDLPMGSQGLVVLPHLAGLGLGGISNGVFTDTYQLLVVAILHLILSGVYGGGGMLHAFRYEEKLESYPATSRANKFKFDWNDPDRLTFILGHHLLFLAAGNIQFVEWARVHGIYDPVAGAVRQVEYNLDLGMIWNHQFDFLSISSLEDIMGGHAFLAFFMAAGGVFHILTKNYGEYNSFKGADLLSAEFVLSTSLAGAAYTAFVAALWCASNTTIYPVDLYGDVLQFKLGIAPYWIDTDSSLAADAHTGRAWLTNVHFFIGFFYLQGHFFHGLRALGFDFKSIGKLFDNLETSETTLN</sequence>